<proteinExistence type="inferred from homology"/>
<evidence type="ECO:0000255" key="1">
    <source>
        <dbReference type="HAMAP-Rule" id="MF_00154"/>
    </source>
</evidence>
<name>COXX_ACAM1</name>
<protein>
    <recommendedName>
        <fullName evidence="1">Protoheme IX farnesyltransferase</fullName>
        <ecNumber evidence="1">2.5.1.141</ecNumber>
    </recommendedName>
    <alternativeName>
        <fullName evidence="1">Heme B farnesyltransferase</fullName>
    </alternativeName>
    <alternativeName>
        <fullName evidence="1">Heme O synthase</fullName>
    </alternativeName>
</protein>
<organism>
    <name type="scientific">Acaryochloris marina (strain MBIC 11017)</name>
    <dbReference type="NCBI Taxonomy" id="329726"/>
    <lineage>
        <taxon>Bacteria</taxon>
        <taxon>Bacillati</taxon>
        <taxon>Cyanobacteriota</taxon>
        <taxon>Cyanophyceae</taxon>
        <taxon>Acaryochloridales</taxon>
        <taxon>Acaryochloridaceae</taxon>
        <taxon>Acaryochloris</taxon>
    </lineage>
</organism>
<reference key="1">
    <citation type="journal article" date="2008" name="Proc. Natl. Acad. Sci. U.S.A.">
        <title>Niche adaptation and genome expansion in the chlorophyll d-producing cyanobacterium Acaryochloris marina.</title>
        <authorList>
            <person name="Swingley W.D."/>
            <person name="Chen M."/>
            <person name="Cheung P.C."/>
            <person name="Conrad A.L."/>
            <person name="Dejesa L.C."/>
            <person name="Hao J."/>
            <person name="Honchak B.M."/>
            <person name="Karbach L.E."/>
            <person name="Kurdoglu A."/>
            <person name="Lahiri S."/>
            <person name="Mastrian S.D."/>
            <person name="Miyashita H."/>
            <person name="Page L."/>
            <person name="Ramakrishna P."/>
            <person name="Satoh S."/>
            <person name="Sattley W.M."/>
            <person name="Shimada Y."/>
            <person name="Taylor H.L."/>
            <person name="Tomo T."/>
            <person name="Tsuchiya T."/>
            <person name="Wang Z.T."/>
            <person name="Raymond J."/>
            <person name="Mimuro M."/>
            <person name="Blankenship R.E."/>
            <person name="Touchman J.W."/>
        </authorList>
    </citation>
    <scope>NUCLEOTIDE SEQUENCE [LARGE SCALE GENOMIC DNA]</scope>
    <source>
        <strain>MBIC 11017</strain>
    </source>
</reference>
<dbReference type="EC" id="2.5.1.141" evidence="1"/>
<dbReference type="EMBL" id="CP000828">
    <property type="protein sequence ID" value="ABW29597.1"/>
    <property type="molecule type" value="Genomic_DNA"/>
</dbReference>
<dbReference type="RefSeq" id="WP_012164900.1">
    <property type="nucleotide sequence ID" value="NC_009925.1"/>
</dbReference>
<dbReference type="SMR" id="B0C0A5"/>
<dbReference type="STRING" id="329726.AM1_4623"/>
<dbReference type="KEGG" id="amr:AM1_4623"/>
<dbReference type="eggNOG" id="COG0109">
    <property type="taxonomic scope" value="Bacteria"/>
</dbReference>
<dbReference type="HOGENOM" id="CLU_029631_0_2_3"/>
<dbReference type="OrthoDB" id="9814417at2"/>
<dbReference type="UniPathway" id="UPA00834">
    <property type="reaction ID" value="UER00712"/>
</dbReference>
<dbReference type="Proteomes" id="UP000000268">
    <property type="component" value="Chromosome"/>
</dbReference>
<dbReference type="GO" id="GO:0005886">
    <property type="term" value="C:plasma membrane"/>
    <property type="evidence" value="ECO:0007669"/>
    <property type="project" value="UniProtKB-SubCell"/>
</dbReference>
<dbReference type="GO" id="GO:0008495">
    <property type="term" value="F:protoheme IX farnesyltransferase activity"/>
    <property type="evidence" value="ECO:0007669"/>
    <property type="project" value="UniProtKB-UniRule"/>
</dbReference>
<dbReference type="GO" id="GO:0048034">
    <property type="term" value="P:heme O biosynthetic process"/>
    <property type="evidence" value="ECO:0007669"/>
    <property type="project" value="UniProtKB-UniRule"/>
</dbReference>
<dbReference type="CDD" id="cd13957">
    <property type="entry name" value="PT_UbiA_Cox10"/>
    <property type="match status" value="1"/>
</dbReference>
<dbReference type="FunFam" id="1.10.357.140:FF:000001">
    <property type="entry name" value="Protoheme IX farnesyltransferase"/>
    <property type="match status" value="1"/>
</dbReference>
<dbReference type="Gene3D" id="1.10.357.140">
    <property type="entry name" value="UbiA prenyltransferase"/>
    <property type="match status" value="1"/>
</dbReference>
<dbReference type="HAMAP" id="MF_00154">
    <property type="entry name" value="CyoE_CtaB"/>
    <property type="match status" value="1"/>
</dbReference>
<dbReference type="InterPro" id="IPR006369">
    <property type="entry name" value="Protohaem_IX_farnesylTrfase"/>
</dbReference>
<dbReference type="InterPro" id="IPR000537">
    <property type="entry name" value="UbiA_prenyltransferase"/>
</dbReference>
<dbReference type="InterPro" id="IPR030470">
    <property type="entry name" value="UbiA_prenylTrfase_CS"/>
</dbReference>
<dbReference type="InterPro" id="IPR044878">
    <property type="entry name" value="UbiA_sf"/>
</dbReference>
<dbReference type="NCBIfam" id="TIGR01473">
    <property type="entry name" value="cyoE_ctaB"/>
    <property type="match status" value="1"/>
</dbReference>
<dbReference type="NCBIfam" id="NF003349">
    <property type="entry name" value="PRK04375.1-2"/>
    <property type="match status" value="1"/>
</dbReference>
<dbReference type="PANTHER" id="PTHR43448:SF7">
    <property type="entry name" value="4-HYDROXYBENZOATE SOLANESYLTRANSFERASE"/>
    <property type="match status" value="1"/>
</dbReference>
<dbReference type="PANTHER" id="PTHR43448">
    <property type="entry name" value="PROTOHEME IX FARNESYLTRANSFERASE, MITOCHONDRIAL"/>
    <property type="match status" value="1"/>
</dbReference>
<dbReference type="Pfam" id="PF01040">
    <property type="entry name" value="UbiA"/>
    <property type="match status" value="1"/>
</dbReference>
<dbReference type="PROSITE" id="PS00943">
    <property type="entry name" value="UBIA"/>
    <property type="match status" value="1"/>
</dbReference>
<sequence>MQKTIWAEVPWLHPGFAQTCIDFYQLTKPRLILLFLITTAAAMWVASSGQVGPRLFLTTLLAGACAAGSANTINCIYDRDIDYIMERTRHRPLPSGRIQVWQASVFAASLALTAFFLLAFGANLLSACLAMAGIAVYIGVYTYWLKRSSTQNIVIGGAAGAIPPLVGWAAVTGELSWAAWVLFAIIFIWTPPHFWPLAMMIEEDYSKVGVPMMPVVNGMATTANQTFIYTLLLLPVTLLLVYPLKVSGALYASIAIVLWVQFIHKAWQLTQTPDDKQMARSVFKFSILYMMLLCAGMGVDSLPWTQQIWHHSTHILQAWIPSIG</sequence>
<accession>B0C0A5</accession>
<comment type="function">
    <text evidence="1">Converts heme B (protoheme IX) to heme O by substitution of the vinyl group on carbon 2 of heme B porphyrin ring with a hydroxyethyl farnesyl side group.</text>
</comment>
<comment type="catalytic activity">
    <reaction evidence="1">
        <text>heme b + (2E,6E)-farnesyl diphosphate + H2O = Fe(II)-heme o + diphosphate</text>
        <dbReference type="Rhea" id="RHEA:28070"/>
        <dbReference type="ChEBI" id="CHEBI:15377"/>
        <dbReference type="ChEBI" id="CHEBI:33019"/>
        <dbReference type="ChEBI" id="CHEBI:60344"/>
        <dbReference type="ChEBI" id="CHEBI:60530"/>
        <dbReference type="ChEBI" id="CHEBI:175763"/>
        <dbReference type="EC" id="2.5.1.141"/>
    </reaction>
</comment>
<comment type="pathway">
    <text evidence="1">Porphyrin-containing compound metabolism; heme O biosynthesis; heme O from protoheme: step 1/1.</text>
</comment>
<comment type="subcellular location">
    <subcellularLocation>
        <location evidence="1">Cell inner membrane</location>
        <topology evidence="1">Multi-pass membrane protein</topology>
    </subcellularLocation>
</comment>
<comment type="miscellaneous">
    <text evidence="1">Carbon 2 of the heme B porphyrin ring is defined according to the Fischer nomenclature.</text>
</comment>
<comment type="similarity">
    <text evidence="1">Belongs to the UbiA prenyltransferase family. Protoheme IX farnesyltransferase subfamily.</text>
</comment>
<gene>
    <name evidence="1" type="primary">ctaB</name>
    <name type="ordered locus">AM1_4623</name>
</gene>
<feature type="chain" id="PRO_0000346022" description="Protoheme IX farnesyltransferase">
    <location>
        <begin position="1"/>
        <end position="324"/>
    </location>
</feature>
<feature type="transmembrane region" description="Helical" evidence="1">
    <location>
        <begin position="31"/>
        <end position="51"/>
    </location>
</feature>
<feature type="transmembrane region" description="Helical" evidence="1">
    <location>
        <begin position="56"/>
        <end position="76"/>
    </location>
</feature>
<feature type="transmembrane region" description="Helical" evidence="1">
    <location>
        <begin position="105"/>
        <end position="125"/>
    </location>
</feature>
<feature type="transmembrane region" description="Helical" evidence="1">
    <location>
        <begin position="126"/>
        <end position="146"/>
    </location>
</feature>
<feature type="transmembrane region" description="Helical" evidence="1">
    <location>
        <begin position="153"/>
        <end position="173"/>
    </location>
</feature>
<feature type="transmembrane region" description="Helical" evidence="1">
    <location>
        <begin position="181"/>
        <end position="201"/>
    </location>
</feature>
<feature type="transmembrane region" description="Helical" evidence="1">
    <location>
        <begin position="214"/>
        <end position="234"/>
    </location>
</feature>
<feature type="transmembrane region" description="Helical" evidence="1">
    <location>
        <begin position="238"/>
        <end position="258"/>
    </location>
</feature>
<feature type="transmembrane region" description="Helical" evidence="1">
    <location>
        <begin position="285"/>
        <end position="305"/>
    </location>
</feature>
<keyword id="KW-0997">Cell inner membrane</keyword>
<keyword id="KW-1003">Cell membrane</keyword>
<keyword id="KW-0350">Heme biosynthesis</keyword>
<keyword id="KW-0472">Membrane</keyword>
<keyword id="KW-1185">Reference proteome</keyword>
<keyword id="KW-0808">Transferase</keyword>
<keyword id="KW-0812">Transmembrane</keyword>
<keyword id="KW-1133">Transmembrane helix</keyword>